<keyword id="KW-1217">Cell adhesion impairing toxin</keyword>
<keyword id="KW-1015">Disulfide bond</keyword>
<keyword id="KW-1199">Hemostasis impairing toxin</keyword>
<keyword id="KW-1201">Platelet aggregation inhibiting toxin</keyword>
<keyword id="KW-0964">Secreted</keyword>
<keyword id="KW-0800">Toxin</keyword>
<sequence length="83" mass="9064">SPPVCGNELLEEGEECDCGSPANCQDRCCNAATCKLTPGSQCSYGECCDQCKFKKARTVCRIARGDWNDDYCTGKSSDCPWNH</sequence>
<feature type="chain" id="PRO_0000318183" description="Disintegrin isoform D-3">
    <location>
        <begin position="1"/>
        <end position="83"/>
    </location>
</feature>
<feature type="domain" description="Disintegrin" evidence="2">
    <location>
        <begin position="2"/>
        <end position="83"/>
    </location>
</feature>
<feature type="short sequence motif" description="Cell attachment site">
    <location>
        <begin position="64"/>
        <end position="66"/>
    </location>
</feature>
<feature type="disulfide bond" evidence="2">
    <location>
        <begin position="5"/>
        <end position="24"/>
    </location>
</feature>
<feature type="disulfide bond" evidence="2">
    <location>
        <begin position="16"/>
        <end position="34"/>
    </location>
</feature>
<feature type="disulfide bond" evidence="2">
    <location>
        <begin position="18"/>
        <end position="29"/>
    </location>
</feature>
<feature type="disulfide bond" evidence="2">
    <location>
        <begin position="28"/>
        <end position="51"/>
    </location>
</feature>
<feature type="disulfide bond" evidence="2">
    <location>
        <begin position="42"/>
        <end position="48"/>
    </location>
</feature>
<feature type="disulfide bond" evidence="2">
    <location>
        <begin position="47"/>
        <end position="72"/>
    </location>
</feature>
<feature type="disulfide bond" evidence="2">
    <location>
        <begin position="60"/>
        <end position="79"/>
    </location>
</feature>
<protein>
    <recommendedName>
        <fullName>Disintegrin isoform D-3</fullName>
    </recommendedName>
</protein>
<dbReference type="EMBL" id="AY924404">
    <property type="protein sequence ID" value="AAY43683.1"/>
    <property type="molecule type" value="mRNA"/>
</dbReference>
<dbReference type="SMR" id="Q4JCS0"/>
<dbReference type="GO" id="GO:0005576">
    <property type="term" value="C:extracellular region"/>
    <property type="evidence" value="ECO:0007669"/>
    <property type="project" value="UniProtKB-SubCell"/>
</dbReference>
<dbReference type="GO" id="GO:0005886">
    <property type="term" value="C:plasma membrane"/>
    <property type="evidence" value="ECO:0007669"/>
    <property type="project" value="TreeGrafter"/>
</dbReference>
<dbReference type="GO" id="GO:0090729">
    <property type="term" value="F:toxin activity"/>
    <property type="evidence" value="ECO:0007669"/>
    <property type="project" value="UniProtKB-KW"/>
</dbReference>
<dbReference type="FunFam" id="4.10.70.10:FF:000001">
    <property type="entry name" value="Disintegrin and metalloproteinase domain-containing protein 22"/>
    <property type="match status" value="1"/>
</dbReference>
<dbReference type="Gene3D" id="4.10.70.10">
    <property type="entry name" value="Disintegrin domain"/>
    <property type="match status" value="1"/>
</dbReference>
<dbReference type="InterPro" id="IPR018358">
    <property type="entry name" value="Disintegrin_CS"/>
</dbReference>
<dbReference type="InterPro" id="IPR001762">
    <property type="entry name" value="Disintegrin_dom"/>
</dbReference>
<dbReference type="InterPro" id="IPR036436">
    <property type="entry name" value="Disintegrin_dom_sf"/>
</dbReference>
<dbReference type="PANTHER" id="PTHR11905">
    <property type="entry name" value="ADAM A DISINTEGRIN AND METALLOPROTEASE DOMAIN"/>
    <property type="match status" value="1"/>
</dbReference>
<dbReference type="PANTHER" id="PTHR11905:SF32">
    <property type="entry name" value="DISINTEGRIN AND METALLOPROTEINASE DOMAIN-CONTAINING PROTEIN 28"/>
    <property type="match status" value="1"/>
</dbReference>
<dbReference type="Pfam" id="PF00200">
    <property type="entry name" value="Disintegrin"/>
    <property type="match status" value="1"/>
</dbReference>
<dbReference type="PRINTS" id="PR00289">
    <property type="entry name" value="DISINTEGRIN"/>
</dbReference>
<dbReference type="SMART" id="SM00050">
    <property type="entry name" value="DISIN"/>
    <property type="match status" value="1"/>
</dbReference>
<dbReference type="SUPFAM" id="SSF57552">
    <property type="entry name" value="Blood coagulation inhibitor (disintegrin)"/>
    <property type="match status" value="1"/>
</dbReference>
<dbReference type="PROSITE" id="PS00427">
    <property type="entry name" value="DISINTEGRIN_1"/>
    <property type="match status" value="1"/>
</dbReference>
<dbReference type="PROSITE" id="PS50214">
    <property type="entry name" value="DISINTEGRIN_2"/>
    <property type="match status" value="1"/>
</dbReference>
<reference key="1">
    <citation type="submission" date="2005-02" db="EMBL/GenBank/DDBJ databases">
        <title>Isolation of cDNAs encoding five Bitis arietans disintegrin isoforms and identification of shared antigenic epitopes.</title>
        <authorList>
            <person name="Oliver J."/>
            <person name="Theakston R.D.G."/>
            <person name="Harrison R.A."/>
        </authorList>
    </citation>
    <scope>NUCLEOTIDE SEQUENCE [MRNA]</scope>
    <source>
        <tissue>Venom gland</tissue>
    </source>
</reference>
<evidence type="ECO:0000250" key="1"/>
<evidence type="ECO:0000255" key="2">
    <source>
        <dbReference type="PROSITE-ProRule" id="PRU00068"/>
    </source>
</evidence>
<evidence type="ECO:0000305" key="3"/>
<organism>
    <name type="scientific">Bitis arietans</name>
    <name type="common">African puff adder</name>
    <dbReference type="NCBI Taxonomy" id="8692"/>
    <lineage>
        <taxon>Eukaryota</taxon>
        <taxon>Metazoa</taxon>
        <taxon>Chordata</taxon>
        <taxon>Craniata</taxon>
        <taxon>Vertebrata</taxon>
        <taxon>Euteleostomi</taxon>
        <taxon>Lepidosauria</taxon>
        <taxon>Squamata</taxon>
        <taxon>Bifurcata</taxon>
        <taxon>Unidentata</taxon>
        <taxon>Episquamata</taxon>
        <taxon>Toxicofera</taxon>
        <taxon>Serpentes</taxon>
        <taxon>Colubroidea</taxon>
        <taxon>Viperidae</taxon>
        <taxon>Viperinae</taxon>
        <taxon>Bitis</taxon>
    </lineage>
</organism>
<name>VM2D3_BITAR</name>
<accession>Q4JCS0</accession>
<comment type="function">
    <text evidence="1">Inhibits fibrinogen interaction with platelets. Acts by binding to alpha-IIb/beta-3 (ITGA2B/ITGB3) on the platelet surface and inhibits aggregation induced by ADP, thrombin, platelet-activating factor and collagen (By similarity).</text>
</comment>
<comment type="subunit">
    <text evidence="1">Monomer (disintegrin).</text>
</comment>
<comment type="subcellular location">
    <subcellularLocation>
        <location evidence="1">Secreted</location>
    </subcellularLocation>
</comment>
<comment type="tissue specificity">
    <text>Expressed by the venom gland.</text>
</comment>
<comment type="miscellaneous">
    <text>The disintegrin belongs to the long disintegrin subfamily.</text>
</comment>
<comment type="similarity">
    <text evidence="3">Belongs to the venom metalloproteinase (M12B) family. P-II subfamily. P-IIa sub-subfamily.</text>
</comment>
<proteinExistence type="evidence at transcript level"/>